<reference key="1">
    <citation type="submission" date="2009-02" db="EMBL/GenBank/DDBJ databases">
        <title>Genome sequence of Bacillus cereus 03BB102.</title>
        <authorList>
            <person name="Dodson R.J."/>
            <person name="Jackson P."/>
            <person name="Munk A.C."/>
            <person name="Brettin T."/>
            <person name="Bruce D."/>
            <person name="Detter C."/>
            <person name="Tapia R."/>
            <person name="Han C."/>
            <person name="Sutton G."/>
            <person name="Sims D."/>
        </authorList>
    </citation>
    <scope>NUCLEOTIDE SEQUENCE [LARGE SCALE GENOMIC DNA]</scope>
    <source>
        <strain>03BB102</strain>
    </source>
</reference>
<gene>
    <name evidence="1" type="primary">rplD</name>
    <name type="ordered locus">BCA_0140</name>
</gene>
<evidence type="ECO:0000255" key="1">
    <source>
        <dbReference type="HAMAP-Rule" id="MF_01328"/>
    </source>
</evidence>
<evidence type="ECO:0000256" key="2">
    <source>
        <dbReference type="SAM" id="MobiDB-lite"/>
    </source>
</evidence>
<evidence type="ECO:0000305" key="3"/>
<organism>
    <name type="scientific">Bacillus cereus (strain 03BB102)</name>
    <dbReference type="NCBI Taxonomy" id="572264"/>
    <lineage>
        <taxon>Bacteria</taxon>
        <taxon>Bacillati</taxon>
        <taxon>Bacillota</taxon>
        <taxon>Bacilli</taxon>
        <taxon>Bacillales</taxon>
        <taxon>Bacillaceae</taxon>
        <taxon>Bacillus</taxon>
        <taxon>Bacillus cereus group</taxon>
    </lineage>
</organism>
<dbReference type="EMBL" id="CP001407">
    <property type="protein sequence ID" value="ACO28163.1"/>
    <property type="molecule type" value="Genomic_DNA"/>
</dbReference>
<dbReference type="RefSeq" id="WP_001127258.1">
    <property type="nucleotide sequence ID" value="NZ_CP009318.1"/>
</dbReference>
<dbReference type="SMR" id="C1ET40"/>
<dbReference type="GeneID" id="93010942"/>
<dbReference type="KEGG" id="bcx:BCA_0140"/>
<dbReference type="PATRIC" id="fig|572264.18.peg.175"/>
<dbReference type="Proteomes" id="UP000002210">
    <property type="component" value="Chromosome"/>
</dbReference>
<dbReference type="GO" id="GO:1990904">
    <property type="term" value="C:ribonucleoprotein complex"/>
    <property type="evidence" value="ECO:0007669"/>
    <property type="project" value="UniProtKB-KW"/>
</dbReference>
<dbReference type="GO" id="GO:0005840">
    <property type="term" value="C:ribosome"/>
    <property type="evidence" value="ECO:0007669"/>
    <property type="project" value="UniProtKB-KW"/>
</dbReference>
<dbReference type="GO" id="GO:0019843">
    <property type="term" value="F:rRNA binding"/>
    <property type="evidence" value="ECO:0007669"/>
    <property type="project" value="UniProtKB-UniRule"/>
</dbReference>
<dbReference type="GO" id="GO:0003735">
    <property type="term" value="F:structural constituent of ribosome"/>
    <property type="evidence" value="ECO:0007669"/>
    <property type="project" value="InterPro"/>
</dbReference>
<dbReference type="GO" id="GO:0006412">
    <property type="term" value="P:translation"/>
    <property type="evidence" value="ECO:0007669"/>
    <property type="project" value="UniProtKB-UniRule"/>
</dbReference>
<dbReference type="FunFam" id="3.40.1370.10:FF:000003">
    <property type="entry name" value="50S ribosomal protein L4"/>
    <property type="match status" value="1"/>
</dbReference>
<dbReference type="Gene3D" id="3.40.1370.10">
    <property type="match status" value="1"/>
</dbReference>
<dbReference type="HAMAP" id="MF_01328_B">
    <property type="entry name" value="Ribosomal_uL4_B"/>
    <property type="match status" value="1"/>
</dbReference>
<dbReference type="InterPro" id="IPR002136">
    <property type="entry name" value="Ribosomal_uL4"/>
</dbReference>
<dbReference type="InterPro" id="IPR013005">
    <property type="entry name" value="Ribosomal_uL4-like"/>
</dbReference>
<dbReference type="InterPro" id="IPR023574">
    <property type="entry name" value="Ribosomal_uL4_dom_sf"/>
</dbReference>
<dbReference type="NCBIfam" id="TIGR03953">
    <property type="entry name" value="rplD_bact"/>
    <property type="match status" value="1"/>
</dbReference>
<dbReference type="PANTHER" id="PTHR10746">
    <property type="entry name" value="50S RIBOSOMAL PROTEIN L4"/>
    <property type="match status" value="1"/>
</dbReference>
<dbReference type="PANTHER" id="PTHR10746:SF6">
    <property type="entry name" value="LARGE RIBOSOMAL SUBUNIT PROTEIN UL4M"/>
    <property type="match status" value="1"/>
</dbReference>
<dbReference type="Pfam" id="PF00573">
    <property type="entry name" value="Ribosomal_L4"/>
    <property type="match status" value="1"/>
</dbReference>
<dbReference type="SUPFAM" id="SSF52166">
    <property type="entry name" value="Ribosomal protein L4"/>
    <property type="match status" value="1"/>
</dbReference>
<keyword id="KW-0687">Ribonucleoprotein</keyword>
<keyword id="KW-0689">Ribosomal protein</keyword>
<keyword id="KW-0694">RNA-binding</keyword>
<keyword id="KW-0699">rRNA-binding</keyword>
<name>RL4_BACC3</name>
<protein>
    <recommendedName>
        <fullName evidence="1">Large ribosomal subunit protein uL4</fullName>
    </recommendedName>
    <alternativeName>
        <fullName evidence="3">50S ribosomal protein L4</fullName>
    </alternativeName>
</protein>
<comment type="function">
    <text evidence="1">One of the primary rRNA binding proteins, this protein initially binds near the 5'-end of the 23S rRNA. It is important during the early stages of 50S assembly. It makes multiple contacts with different domains of the 23S rRNA in the assembled 50S subunit and ribosome.</text>
</comment>
<comment type="function">
    <text evidence="1">Forms part of the polypeptide exit tunnel.</text>
</comment>
<comment type="subunit">
    <text evidence="1">Part of the 50S ribosomal subunit.</text>
</comment>
<comment type="similarity">
    <text evidence="1">Belongs to the universal ribosomal protein uL4 family.</text>
</comment>
<accession>C1ET40</accession>
<feature type="chain" id="PRO_1000165985" description="Large ribosomal subunit protein uL4">
    <location>
        <begin position="1"/>
        <end position="207"/>
    </location>
</feature>
<feature type="region of interest" description="Disordered" evidence="2">
    <location>
        <begin position="45"/>
        <end position="89"/>
    </location>
</feature>
<feature type="compositionally biased region" description="Basic residues" evidence="2">
    <location>
        <begin position="60"/>
        <end position="71"/>
    </location>
</feature>
<sequence>MPKVTVYNQTGSQVGEIELAEAIFGIEPNEAVLFEAVMMQRASLRQGTHKVKTRSEVRGGGRKPWRQKGTGRARQGSIRSPQWRGGGTVFGPTPRSYAYKLPKKVRRLAIKSALATKVVENNIVVLEDLVLNAPKTKDMLAVLKGLTVEKKALIVTADANESVELSARNIPGVTVITADGVNVLDVLHHDKLIMTKAAVEKVEEVLA</sequence>
<proteinExistence type="inferred from homology"/>